<name>GUAA_GEODF</name>
<comment type="function">
    <text evidence="1">Catalyzes the synthesis of GMP from XMP.</text>
</comment>
<comment type="catalytic activity">
    <reaction evidence="1">
        <text>XMP + L-glutamine + ATP + H2O = GMP + L-glutamate + AMP + diphosphate + 2 H(+)</text>
        <dbReference type="Rhea" id="RHEA:11680"/>
        <dbReference type="ChEBI" id="CHEBI:15377"/>
        <dbReference type="ChEBI" id="CHEBI:15378"/>
        <dbReference type="ChEBI" id="CHEBI:29985"/>
        <dbReference type="ChEBI" id="CHEBI:30616"/>
        <dbReference type="ChEBI" id="CHEBI:33019"/>
        <dbReference type="ChEBI" id="CHEBI:57464"/>
        <dbReference type="ChEBI" id="CHEBI:58115"/>
        <dbReference type="ChEBI" id="CHEBI:58359"/>
        <dbReference type="ChEBI" id="CHEBI:456215"/>
        <dbReference type="EC" id="6.3.5.2"/>
    </reaction>
</comment>
<comment type="pathway">
    <text evidence="1">Purine metabolism; GMP biosynthesis; GMP from XMP (L-Gln route): step 1/1.</text>
</comment>
<comment type="subunit">
    <text evidence="1">Homodimer.</text>
</comment>
<keyword id="KW-0067">ATP-binding</keyword>
<keyword id="KW-0315">Glutamine amidotransferase</keyword>
<keyword id="KW-0332">GMP biosynthesis</keyword>
<keyword id="KW-0436">Ligase</keyword>
<keyword id="KW-0547">Nucleotide-binding</keyword>
<keyword id="KW-0658">Purine biosynthesis</keyword>
<keyword id="KW-1185">Reference proteome</keyword>
<proteinExistence type="inferred from homology"/>
<accession>B9M9G4</accession>
<evidence type="ECO:0000255" key="1">
    <source>
        <dbReference type="HAMAP-Rule" id="MF_00344"/>
    </source>
</evidence>
<feature type="chain" id="PRO_1000190241" description="GMP synthase [glutamine-hydrolyzing]">
    <location>
        <begin position="1"/>
        <end position="520"/>
    </location>
</feature>
<feature type="domain" description="Glutamine amidotransferase type-1" evidence="1">
    <location>
        <begin position="9"/>
        <end position="202"/>
    </location>
</feature>
<feature type="domain" description="GMPS ATP-PPase" evidence="1">
    <location>
        <begin position="203"/>
        <end position="395"/>
    </location>
</feature>
<feature type="active site" description="Nucleophile" evidence="1">
    <location>
        <position position="86"/>
    </location>
</feature>
<feature type="active site" evidence="1">
    <location>
        <position position="176"/>
    </location>
</feature>
<feature type="active site" evidence="1">
    <location>
        <position position="178"/>
    </location>
</feature>
<feature type="binding site" evidence="1">
    <location>
        <begin position="230"/>
        <end position="236"/>
    </location>
    <ligand>
        <name>ATP</name>
        <dbReference type="ChEBI" id="CHEBI:30616"/>
    </ligand>
</feature>
<reference key="1">
    <citation type="submission" date="2009-01" db="EMBL/GenBank/DDBJ databases">
        <title>Complete sequence of Geobacter sp. FRC-32.</title>
        <authorList>
            <consortium name="US DOE Joint Genome Institute"/>
            <person name="Lucas S."/>
            <person name="Copeland A."/>
            <person name="Lapidus A."/>
            <person name="Glavina del Rio T."/>
            <person name="Dalin E."/>
            <person name="Tice H."/>
            <person name="Bruce D."/>
            <person name="Goodwin L."/>
            <person name="Pitluck S."/>
            <person name="Saunders E."/>
            <person name="Brettin T."/>
            <person name="Detter J.C."/>
            <person name="Han C."/>
            <person name="Larimer F."/>
            <person name="Land M."/>
            <person name="Hauser L."/>
            <person name="Kyrpides N."/>
            <person name="Ovchinnikova G."/>
            <person name="Kostka J."/>
            <person name="Richardson P."/>
        </authorList>
    </citation>
    <scope>NUCLEOTIDE SEQUENCE [LARGE SCALE GENOMIC DNA]</scope>
    <source>
        <strain>DSM 22248 / JCM 15807 / FRC-32</strain>
    </source>
</reference>
<protein>
    <recommendedName>
        <fullName evidence="1">GMP synthase [glutamine-hydrolyzing]</fullName>
        <ecNumber evidence="1">6.3.5.2</ecNumber>
    </recommendedName>
    <alternativeName>
        <fullName evidence="1">GMP synthetase</fullName>
    </alternativeName>
    <alternativeName>
        <fullName evidence="1">Glutamine amidotransferase</fullName>
    </alternativeName>
</protein>
<gene>
    <name evidence="1" type="primary">guaA</name>
    <name type="ordered locus">Geob_2182</name>
</gene>
<dbReference type="EC" id="6.3.5.2" evidence="1"/>
<dbReference type="EMBL" id="CP001390">
    <property type="protein sequence ID" value="ACM20536.1"/>
    <property type="molecule type" value="Genomic_DNA"/>
</dbReference>
<dbReference type="RefSeq" id="WP_012647265.1">
    <property type="nucleotide sequence ID" value="NC_011979.1"/>
</dbReference>
<dbReference type="SMR" id="B9M9G4"/>
<dbReference type="STRING" id="316067.Geob_2182"/>
<dbReference type="MEROPS" id="C26.957"/>
<dbReference type="KEGG" id="geo:Geob_2182"/>
<dbReference type="eggNOG" id="COG0518">
    <property type="taxonomic scope" value="Bacteria"/>
</dbReference>
<dbReference type="eggNOG" id="COG0519">
    <property type="taxonomic scope" value="Bacteria"/>
</dbReference>
<dbReference type="HOGENOM" id="CLU_014340_0_5_7"/>
<dbReference type="OrthoDB" id="9802219at2"/>
<dbReference type="UniPathway" id="UPA00189">
    <property type="reaction ID" value="UER00296"/>
</dbReference>
<dbReference type="Proteomes" id="UP000007721">
    <property type="component" value="Chromosome"/>
</dbReference>
<dbReference type="GO" id="GO:0005829">
    <property type="term" value="C:cytosol"/>
    <property type="evidence" value="ECO:0007669"/>
    <property type="project" value="TreeGrafter"/>
</dbReference>
<dbReference type="GO" id="GO:0005524">
    <property type="term" value="F:ATP binding"/>
    <property type="evidence" value="ECO:0007669"/>
    <property type="project" value="UniProtKB-UniRule"/>
</dbReference>
<dbReference type="GO" id="GO:0003921">
    <property type="term" value="F:GMP synthase activity"/>
    <property type="evidence" value="ECO:0007669"/>
    <property type="project" value="InterPro"/>
</dbReference>
<dbReference type="CDD" id="cd01742">
    <property type="entry name" value="GATase1_GMP_Synthase"/>
    <property type="match status" value="1"/>
</dbReference>
<dbReference type="CDD" id="cd01997">
    <property type="entry name" value="GMP_synthase_C"/>
    <property type="match status" value="1"/>
</dbReference>
<dbReference type="FunFam" id="3.30.300.10:FF:000002">
    <property type="entry name" value="GMP synthase [glutamine-hydrolyzing]"/>
    <property type="match status" value="1"/>
</dbReference>
<dbReference type="FunFam" id="3.40.50.620:FF:000001">
    <property type="entry name" value="GMP synthase [glutamine-hydrolyzing]"/>
    <property type="match status" value="1"/>
</dbReference>
<dbReference type="FunFam" id="3.40.50.880:FF:000001">
    <property type="entry name" value="GMP synthase [glutamine-hydrolyzing]"/>
    <property type="match status" value="1"/>
</dbReference>
<dbReference type="Gene3D" id="3.30.300.10">
    <property type="match status" value="1"/>
</dbReference>
<dbReference type="Gene3D" id="3.40.50.880">
    <property type="match status" value="1"/>
</dbReference>
<dbReference type="Gene3D" id="3.40.50.620">
    <property type="entry name" value="HUPs"/>
    <property type="match status" value="1"/>
</dbReference>
<dbReference type="HAMAP" id="MF_00344">
    <property type="entry name" value="GMP_synthase"/>
    <property type="match status" value="1"/>
</dbReference>
<dbReference type="InterPro" id="IPR029062">
    <property type="entry name" value="Class_I_gatase-like"/>
</dbReference>
<dbReference type="InterPro" id="IPR017926">
    <property type="entry name" value="GATASE"/>
</dbReference>
<dbReference type="InterPro" id="IPR001674">
    <property type="entry name" value="GMP_synth_C"/>
</dbReference>
<dbReference type="InterPro" id="IPR004739">
    <property type="entry name" value="GMP_synth_GATase"/>
</dbReference>
<dbReference type="InterPro" id="IPR022955">
    <property type="entry name" value="GMP_synthase"/>
</dbReference>
<dbReference type="InterPro" id="IPR025777">
    <property type="entry name" value="GMPS_ATP_PPase_dom"/>
</dbReference>
<dbReference type="InterPro" id="IPR022310">
    <property type="entry name" value="NAD/GMP_synthase"/>
</dbReference>
<dbReference type="InterPro" id="IPR014729">
    <property type="entry name" value="Rossmann-like_a/b/a_fold"/>
</dbReference>
<dbReference type="NCBIfam" id="TIGR00884">
    <property type="entry name" value="guaA_Cterm"/>
    <property type="match status" value="1"/>
</dbReference>
<dbReference type="NCBIfam" id="TIGR00888">
    <property type="entry name" value="guaA_Nterm"/>
    <property type="match status" value="1"/>
</dbReference>
<dbReference type="NCBIfam" id="NF000848">
    <property type="entry name" value="PRK00074.1"/>
    <property type="match status" value="1"/>
</dbReference>
<dbReference type="PANTHER" id="PTHR11922:SF2">
    <property type="entry name" value="GMP SYNTHASE [GLUTAMINE-HYDROLYZING]"/>
    <property type="match status" value="1"/>
</dbReference>
<dbReference type="PANTHER" id="PTHR11922">
    <property type="entry name" value="GMP SYNTHASE-RELATED"/>
    <property type="match status" value="1"/>
</dbReference>
<dbReference type="Pfam" id="PF00117">
    <property type="entry name" value="GATase"/>
    <property type="match status" value="1"/>
</dbReference>
<dbReference type="Pfam" id="PF00958">
    <property type="entry name" value="GMP_synt_C"/>
    <property type="match status" value="1"/>
</dbReference>
<dbReference type="Pfam" id="PF02540">
    <property type="entry name" value="NAD_synthase"/>
    <property type="match status" value="1"/>
</dbReference>
<dbReference type="PRINTS" id="PR00097">
    <property type="entry name" value="ANTSNTHASEII"/>
</dbReference>
<dbReference type="PRINTS" id="PR00099">
    <property type="entry name" value="CPSGATASE"/>
</dbReference>
<dbReference type="PRINTS" id="PR00096">
    <property type="entry name" value="GATASE"/>
</dbReference>
<dbReference type="SUPFAM" id="SSF52402">
    <property type="entry name" value="Adenine nucleotide alpha hydrolases-like"/>
    <property type="match status" value="1"/>
</dbReference>
<dbReference type="SUPFAM" id="SSF52317">
    <property type="entry name" value="Class I glutamine amidotransferase-like"/>
    <property type="match status" value="1"/>
</dbReference>
<dbReference type="SUPFAM" id="SSF54810">
    <property type="entry name" value="GMP synthetase C-terminal dimerisation domain"/>
    <property type="match status" value="1"/>
</dbReference>
<dbReference type="PROSITE" id="PS51273">
    <property type="entry name" value="GATASE_TYPE_1"/>
    <property type="match status" value="1"/>
</dbReference>
<dbReference type="PROSITE" id="PS51553">
    <property type="entry name" value="GMPS_ATP_PPASE"/>
    <property type="match status" value="1"/>
</dbReference>
<organism>
    <name type="scientific">Geotalea daltonii (strain DSM 22248 / JCM 15807 / FRC-32)</name>
    <name type="common">Geobacter daltonii</name>
    <dbReference type="NCBI Taxonomy" id="316067"/>
    <lineage>
        <taxon>Bacteria</taxon>
        <taxon>Pseudomonadati</taxon>
        <taxon>Thermodesulfobacteriota</taxon>
        <taxon>Desulfuromonadia</taxon>
        <taxon>Geobacterales</taxon>
        <taxon>Geobacteraceae</taxon>
        <taxon>Geotalea</taxon>
    </lineage>
</organism>
<sequence length="520" mass="57010">MSVDIHSEKILILDFGSQYTQLIARRVREAHVYCELHPFDLELAAIRSFAPSGIILSGGPKSVYEEGAPAVAEELFELGVPVLGICYGMQLMSRHFGGEVVPAGKREFGHAELLAQGTPGPLFDGFFLDGKSPVWMSHGDHVSQVPEGFQVAAGTANAPVCAIQNLACNLYGVQFHPEVNHTPRGEQLIDTFVRKICGCSGKWTPGQIIEDAVARIKQQVGSDRVILGLSGGVDSSVAAALIHRAIGEQLTCVFVDNGLLRLGEGDQVMATFAQNLGVKVIRVDAEDRFLSALAGVSDPEKKRKIIGGLFVEIFEEESNKITDARWLAQGTIYPDVIESAGAKTGKAHNIKSHHNVGGLPEHMKLKLLEPLRELFKDEVRAIGEELGLPHQMVWRHPFPGPGLGVRILGEVRKDYADILRQADAIYIEELYAADHYHKISQAFAVFLPVKSVGVMGDGRTYEYVVALRAVETKDFMTAGWYPLPYEDLARISSRIINEVKGINRVVYDISSKPPATIEWE</sequence>